<proteinExistence type="inferred from homology"/>
<keyword id="KW-0066">ATP synthesis</keyword>
<keyword id="KW-0997">Cell inner membrane</keyword>
<keyword id="KW-1003">Cell membrane</keyword>
<keyword id="KW-0138">CF(0)</keyword>
<keyword id="KW-0375">Hydrogen ion transport</keyword>
<keyword id="KW-0406">Ion transport</keyword>
<keyword id="KW-0472">Membrane</keyword>
<keyword id="KW-0812">Transmembrane</keyword>
<keyword id="KW-1133">Transmembrane helix</keyword>
<keyword id="KW-0813">Transport</keyword>
<gene>
    <name evidence="1" type="primary">atpB</name>
    <name type="ordered locus">ECIAI1_3922</name>
</gene>
<accession>B7M594</accession>
<feature type="chain" id="PRO_1000145272" description="ATP synthase subunit a">
    <location>
        <begin position="1"/>
        <end position="271"/>
    </location>
</feature>
<feature type="transmembrane region" description="Helical" evidence="1">
    <location>
        <begin position="40"/>
        <end position="60"/>
    </location>
</feature>
<feature type="transmembrane region" description="Helical" evidence="1">
    <location>
        <begin position="100"/>
        <end position="120"/>
    </location>
</feature>
<feature type="transmembrane region" description="Helical" evidence="1">
    <location>
        <begin position="146"/>
        <end position="166"/>
    </location>
</feature>
<feature type="transmembrane region" description="Helical" evidence="1">
    <location>
        <begin position="220"/>
        <end position="240"/>
    </location>
</feature>
<feature type="transmembrane region" description="Helical" evidence="1">
    <location>
        <begin position="242"/>
        <end position="262"/>
    </location>
</feature>
<evidence type="ECO:0000255" key="1">
    <source>
        <dbReference type="HAMAP-Rule" id="MF_01393"/>
    </source>
</evidence>
<name>ATP6_ECO8A</name>
<organism>
    <name type="scientific">Escherichia coli O8 (strain IAI1)</name>
    <dbReference type="NCBI Taxonomy" id="585034"/>
    <lineage>
        <taxon>Bacteria</taxon>
        <taxon>Pseudomonadati</taxon>
        <taxon>Pseudomonadota</taxon>
        <taxon>Gammaproteobacteria</taxon>
        <taxon>Enterobacterales</taxon>
        <taxon>Enterobacteriaceae</taxon>
        <taxon>Escherichia</taxon>
    </lineage>
</organism>
<protein>
    <recommendedName>
        <fullName evidence="1">ATP synthase subunit a</fullName>
    </recommendedName>
    <alternativeName>
        <fullName evidence="1">ATP synthase F0 sector subunit a</fullName>
    </alternativeName>
    <alternativeName>
        <fullName evidence="1">F-ATPase subunit 6</fullName>
    </alternativeName>
</protein>
<reference key="1">
    <citation type="journal article" date="2009" name="PLoS Genet.">
        <title>Organised genome dynamics in the Escherichia coli species results in highly diverse adaptive paths.</title>
        <authorList>
            <person name="Touchon M."/>
            <person name="Hoede C."/>
            <person name="Tenaillon O."/>
            <person name="Barbe V."/>
            <person name="Baeriswyl S."/>
            <person name="Bidet P."/>
            <person name="Bingen E."/>
            <person name="Bonacorsi S."/>
            <person name="Bouchier C."/>
            <person name="Bouvet O."/>
            <person name="Calteau A."/>
            <person name="Chiapello H."/>
            <person name="Clermont O."/>
            <person name="Cruveiller S."/>
            <person name="Danchin A."/>
            <person name="Diard M."/>
            <person name="Dossat C."/>
            <person name="Karoui M.E."/>
            <person name="Frapy E."/>
            <person name="Garry L."/>
            <person name="Ghigo J.M."/>
            <person name="Gilles A.M."/>
            <person name="Johnson J."/>
            <person name="Le Bouguenec C."/>
            <person name="Lescat M."/>
            <person name="Mangenot S."/>
            <person name="Martinez-Jehanne V."/>
            <person name="Matic I."/>
            <person name="Nassif X."/>
            <person name="Oztas S."/>
            <person name="Petit M.A."/>
            <person name="Pichon C."/>
            <person name="Rouy Z."/>
            <person name="Ruf C.S."/>
            <person name="Schneider D."/>
            <person name="Tourret J."/>
            <person name="Vacherie B."/>
            <person name="Vallenet D."/>
            <person name="Medigue C."/>
            <person name="Rocha E.P.C."/>
            <person name="Denamur E."/>
        </authorList>
    </citation>
    <scope>NUCLEOTIDE SEQUENCE [LARGE SCALE GENOMIC DNA]</scope>
    <source>
        <strain>IAI1</strain>
    </source>
</reference>
<dbReference type="EMBL" id="CU928160">
    <property type="protein sequence ID" value="CAR00716.1"/>
    <property type="molecule type" value="Genomic_DNA"/>
</dbReference>
<dbReference type="RefSeq" id="WP_000135625.1">
    <property type="nucleotide sequence ID" value="NC_011741.1"/>
</dbReference>
<dbReference type="SMR" id="B7M594"/>
<dbReference type="GeneID" id="93778229"/>
<dbReference type="KEGG" id="ecr:ECIAI1_3922"/>
<dbReference type="HOGENOM" id="CLU_041018_1_0_6"/>
<dbReference type="GO" id="GO:0005886">
    <property type="term" value="C:plasma membrane"/>
    <property type="evidence" value="ECO:0007669"/>
    <property type="project" value="UniProtKB-SubCell"/>
</dbReference>
<dbReference type="GO" id="GO:0045259">
    <property type="term" value="C:proton-transporting ATP synthase complex"/>
    <property type="evidence" value="ECO:0007669"/>
    <property type="project" value="UniProtKB-KW"/>
</dbReference>
<dbReference type="GO" id="GO:0046933">
    <property type="term" value="F:proton-transporting ATP synthase activity, rotational mechanism"/>
    <property type="evidence" value="ECO:0007669"/>
    <property type="project" value="UniProtKB-UniRule"/>
</dbReference>
<dbReference type="GO" id="GO:0042777">
    <property type="term" value="P:proton motive force-driven plasma membrane ATP synthesis"/>
    <property type="evidence" value="ECO:0007669"/>
    <property type="project" value="TreeGrafter"/>
</dbReference>
<dbReference type="CDD" id="cd00310">
    <property type="entry name" value="ATP-synt_Fo_a_6"/>
    <property type="match status" value="1"/>
</dbReference>
<dbReference type="FunFam" id="1.20.120.220:FF:000002">
    <property type="entry name" value="ATP synthase subunit a"/>
    <property type="match status" value="1"/>
</dbReference>
<dbReference type="Gene3D" id="1.20.120.220">
    <property type="entry name" value="ATP synthase, F0 complex, subunit A"/>
    <property type="match status" value="1"/>
</dbReference>
<dbReference type="HAMAP" id="MF_01393">
    <property type="entry name" value="ATP_synth_a_bact"/>
    <property type="match status" value="1"/>
</dbReference>
<dbReference type="InterPro" id="IPR045082">
    <property type="entry name" value="ATP_syn_F0_a_bact/chloroplast"/>
</dbReference>
<dbReference type="InterPro" id="IPR000568">
    <property type="entry name" value="ATP_synth_F0_asu"/>
</dbReference>
<dbReference type="InterPro" id="IPR023011">
    <property type="entry name" value="ATP_synth_F0_asu_AS"/>
</dbReference>
<dbReference type="InterPro" id="IPR035908">
    <property type="entry name" value="F0_ATP_A_sf"/>
</dbReference>
<dbReference type="NCBIfam" id="TIGR01131">
    <property type="entry name" value="ATP_synt_6_or_A"/>
    <property type="match status" value="1"/>
</dbReference>
<dbReference type="NCBIfam" id="NF004477">
    <property type="entry name" value="PRK05815.1-1"/>
    <property type="match status" value="1"/>
</dbReference>
<dbReference type="PANTHER" id="PTHR42823">
    <property type="entry name" value="ATP SYNTHASE SUBUNIT A, CHLOROPLASTIC"/>
    <property type="match status" value="1"/>
</dbReference>
<dbReference type="PANTHER" id="PTHR42823:SF3">
    <property type="entry name" value="ATP SYNTHASE SUBUNIT A, CHLOROPLASTIC"/>
    <property type="match status" value="1"/>
</dbReference>
<dbReference type="Pfam" id="PF00119">
    <property type="entry name" value="ATP-synt_A"/>
    <property type="match status" value="1"/>
</dbReference>
<dbReference type="PRINTS" id="PR00123">
    <property type="entry name" value="ATPASEA"/>
</dbReference>
<dbReference type="SUPFAM" id="SSF81336">
    <property type="entry name" value="F1F0 ATP synthase subunit A"/>
    <property type="match status" value="1"/>
</dbReference>
<dbReference type="PROSITE" id="PS00449">
    <property type="entry name" value="ATPASE_A"/>
    <property type="match status" value="1"/>
</dbReference>
<sequence length="271" mass="30303">MASENMTPQDYIGHHLNNLQLDLRTFSLVDPQNPPATFWTINIDSMFFSVVLGLLFLVLFRSVAKKATSGVPGKFQTAIELVIGFVNGSVKDMYHGKSKLIAPLALTIFVWVFLMNLMDLLPIDLLPYIAEHVLGLPALRVVPSADVNVTLSMALGVFILILFYSIKMKGIGGFTKELTLQPFNHWAFIPVNLILEGVSLLSKPVSLGLRLFGNMYAGELIFILIAGLLPWWSQWILNVPWAIFHILIITLQAFIFMVLTIVYLSMASEEH</sequence>
<comment type="function">
    <text evidence="1">Key component of the proton channel; it plays a direct role in the translocation of protons across the membrane.</text>
</comment>
<comment type="subunit">
    <text evidence="1">F-type ATPases have 2 components, CF(1) - the catalytic core - and CF(0) - the membrane proton channel. CF(1) has five subunits: alpha(3), beta(3), gamma(1), delta(1), epsilon(1). CF(0) has three main subunits: a(1), b(2) and c(9-12). The alpha and beta chains form an alternating ring which encloses part of the gamma chain. CF(1) is attached to CF(0) by a central stalk formed by the gamma and epsilon chains, while a peripheral stalk is formed by the delta and b chains.</text>
</comment>
<comment type="subcellular location">
    <subcellularLocation>
        <location evidence="1">Cell inner membrane</location>
        <topology evidence="1">Multi-pass membrane protein</topology>
    </subcellularLocation>
</comment>
<comment type="similarity">
    <text evidence="1">Belongs to the ATPase A chain family.</text>
</comment>